<protein>
    <recommendedName>
        <fullName evidence="3">U-megalopygitoxin(9)-Mo13</fullName>
        <shortName evidence="3">U-MPTX(9)-Mo13</shortName>
        <shortName evidence="6">U-MPTX.9-13</shortName>
    </recommendedName>
</protein>
<proteinExistence type="evidence at protein level"/>
<organism>
    <name type="scientific">Megalopyge opercularis</name>
    <name type="common">Southern flannel moth</name>
    <name type="synonym">Phalaena opercularis</name>
    <dbReference type="NCBI Taxonomy" id="1113279"/>
    <lineage>
        <taxon>Eukaryota</taxon>
        <taxon>Metazoa</taxon>
        <taxon>Ecdysozoa</taxon>
        <taxon>Arthropoda</taxon>
        <taxon>Hexapoda</taxon>
        <taxon>Insecta</taxon>
        <taxon>Pterygota</taxon>
        <taxon>Neoptera</taxon>
        <taxon>Endopterygota</taxon>
        <taxon>Lepidoptera</taxon>
        <taxon>Glossata</taxon>
        <taxon>Ditrysia</taxon>
        <taxon>Zygaenoidea</taxon>
        <taxon>Megalopygidae</taxon>
        <taxon>Megalopyge</taxon>
    </lineage>
</organism>
<evidence type="ECO:0000255" key="1"/>
<evidence type="ECO:0000269" key="2">
    <source>
    </source>
</evidence>
<evidence type="ECO:0000303" key="3">
    <source>
    </source>
</evidence>
<evidence type="ECO:0000305" key="4"/>
<evidence type="ECO:0000305" key="5">
    <source>
    </source>
</evidence>
<evidence type="ECO:0000312" key="6">
    <source>
        <dbReference type="EMBL" id="WJJ70391.1"/>
    </source>
</evidence>
<reference key="1">
    <citation type="journal article" date="2023" name="Proc. Natl. Acad. Sci. U.S.A.">
        <title>Horizontal gene transfer underlies the painful stings of asp caterpillars (Lepidoptera: Megalopygidae).</title>
        <authorList>
            <person name="Walker A.A."/>
            <person name="Robinson S.D."/>
            <person name="Merritt D.J."/>
            <person name="Cardoso F.C."/>
            <person name="Goudarzi M.H."/>
            <person name="Mercedes R.S."/>
            <person name="Eagles D.A."/>
            <person name="Cooper P."/>
            <person name="Zdenek C.N."/>
            <person name="Fry B.G."/>
            <person name="Hall D.W."/>
            <person name="Vetter I."/>
            <person name="King G.F."/>
        </authorList>
    </citation>
    <scope>NUCLEOTIDE SEQUENCE [MRNA]</scope>
    <scope>MASS SPECTROMETRY</scope>
    <scope>SYNTHESIS OF 24-48</scope>
    <scope>SUBCELLULAR LOCATION</scope>
    <scope>TISSUE SPECIFICITY</scope>
    <scope>DEVELOPMENTAL STAGE</scope>
    <source>
        <tissue>Venom</tissue>
    </source>
</reference>
<comment type="function">
    <text evidence="4">Probable toxin.</text>
</comment>
<comment type="subcellular location">
    <subcellularLocation>
        <location evidence="2">Secreted</location>
    </subcellularLocation>
</comment>
<comment type="tissue specificity">
    <text evidence="2">Expressed by the venom apparatus.</text>
</comment>
<comment type="developmental stage">
    <text evidence="2">Larvae.</text>
</comment>
<comment type="mass spectrometry" mass="3018.43" method="MALDI" evidence="2">
    <text>Monoisotopic mass.</text>
</comment>
<comment type="similarity">
    <text evidence="4">Belongs to the caterpillar 9 family.</text>
</comment>
<sequence length="50" mass="5880">MKLVFLFFIVAVMVSLFVGMTEADKPRFLTTVCQDTYEKCKEQMLKKDKK</sequence>
<dbReference type="EMBL" id="OP514873">
    <property type="protein sequence ID" value="WJJ70391.1"/>
    <property type="molecule type" value="mRNA"/>
</dbReference>
<dbReference type="GO" id="GO:0005576">
    <property type="term" value="C:extracellular region"/>
    <property type="evidence" value="ECO:0007669"/>
    <property type="project" value="UniProtKB-SubCell"/>
</dbReference>
<dbReference type="GO" id="GO:0090729">
    <property type="term" value="F:toxin activity"/>
    <property type="evidence" value="ECO:0007669"/>
    <property type="project" value="UniProtKB-KW"/>
</dbReference>
<accession>P0DXW8</accession>
<keyword id="KW-0165">Cleavage on pair of basic residues</keyword>
<keyword id="KW-1015">Disulfide bond</keyword>
<keyword id="KW-0964">Secreted</keyword>
<keyword id="KW-0732">Signal</keyword>
<keyword id="KW-0800">Toxin</keyword>
<name>TXU9D_MEGOP</name>
<feature type="signal peptide" evidence="1">
    <location>
        <begin position="1"/>
        <end position="23"/>
    </location>
</feature>
<feature type="peptide" id="PRO_0000461526" description="U-megalopygitoxin(9)-Mo13" evidence="5">
    <location>
        <begin position="24"/>
        <end position="48"/>
    </location>
</feature>
<feature type="disulfide bond" evidence="5">
    <location>
        <begin position="33"/>
        <end position="40"/>
    </location>
</feature>